<feature type="chain" id="PRO_1000076083" description="33 kDa chaperonin">
    <location>
        <begin position="1"/>
        <end position="304"/>
    </location>
</feature>
<feature type="disulfide bond" description="Redox-active" evidence="1">
    <location>
        <begin position="245"/>
        <end position="247"/>
    </location>
</feature>
<feature type="disulfide bond" description="Redox-active" evidence="1">
    <location>
        <begin position="278"/>
        <end position="281"/>
    </location>
</feature>
<protein>
    <recommendedName>
        <fullName evidence="1">33 kDa chaperonin</fullName>
    </recommendedName>
    <alternativeName>
        <fullName evidence="1">Heat shock protein 33 homolog</fullName>
        <shortName evidence="1">HSP33</shortName>
    </alternativeName>
</protein>
<reference key="1">
    <citation type="journal article" date="2007" name="DNA Res.">
        <title>Complete genomic structure of the bloom-forming toxic cyanobacterium Microcystis aeruginosa NIES-843.</title>
        <authorList>
            <person name="Kaneko T."/>
            <person name="Nakajima N."/>
            <person name="Okamoto S."/>
            <person name="Suzuki I."/>
            <person name="Tanabe Y."/>
            <person name="Tamaoki M."/>
            <person name="Nakamura Y."/>
            <person name="Kasai F."/>
            <person name="Watanabe A."/>
            <person name="Kawashima K."/>
            <person name="Kishida Y."/>
            <person name="Ono A."/>
            <person name="Shimizu Y."/>
            <person name="Takahashi C."/>
            <person name="Minami C."/>
            <person name="Fujishiro T."/>
            <person name="Kohara M."/>
            <person name="Katoh M."/>
            <person name="Nakazaki N."/>
            <person name="Nakayama S."/>
            <person name="Yamada M."/>
            <person name="Tabata S."/>
            <person name="Watanabe M.M."/>
        </authorList>
    </citation>
    <scope>NUCLEOTIDE SEQUENCE [LARGE SCALE GENOMIC DNA]</scope>
    <source>
        <strain>NIES-843 / IAM M-247</strain>
    </source>
</reference>
<proteinExistence type="inferred from homology"/>
<organism>
    <name type="scientific">Microcystis aeruginosa (strain NIES-843 / IAM M-2473)</name>
    <dbReference type="NCBI Taxonomy" id="449447"/>
    <lineage>
        <taxon>Bacteria</taxon>
        <taxon>Bacillati</taxon>
        <taxon>Cyanobacteriota</taxon>
        <taxon>Cyanophyceae</taxon>
        <taxon>Oscillatoriophycideae</taxon>
        <taxon>Chroococcales</taxon>
        <taxon>Microcystaceae</taxon>
        <taxon>Microcystis</taxon>
    </lineage>
</organism>
<keyword id="KW-0143">Chaperone</keyword>
<keyword id="KW-0963">Cytoplasm</keyword>
<keyword id="KW-1015">Disulfide bond</keyword>
<keyword id="KW-0676">Redox-active center</keyword>
<keyword id="KW-0862">Zinc</keyword>
<accession>B0JYF4</accession>
<dbReference type="EMBL" id="AP009552">
    <property type="protein sequence ID" value="BAG05192.1"/>
    <property type="molecule type" value="Genomic_DNA"/>
</dbReference>
<dbReference type="RefSeq" id="WP_002796148.1">
    <property type="nucleotide sequence ID" value="NC_010296.1"/>
</dbReference>
<dbReference type="SMR" id="B0JYF4"/>
<dbReference type="STRING" id="449447.MAE_53700"/>
<dbReference type="PaxDb" id="449447-MAE_53700"/>
<dbReference type="EnsemblBacteria" id="BAG05192">
    <property type="protein sequence ID" value="BAG05192"/>
    <property type="gene ID" value="MAE_53700"/>
</dbReference>
<dbReference type="KEGG" id="mar:MAE_53700"/>
<dbReference type="eggNOG" id="COG1281">
    <property type="taxonomic scope" value="Bacteria"/>
</dbReference>
<dbReference type="HOGENOM" id="CLU_054493_1_0_3"/>
<dbReference type="BioCyc" id="MAER449447:MAE_RS23335-MONOMER"/>
<dbReference type="Proteomes" id="UP000001510">
    <property type="component" value="Chromosome"/>
</dbReference>
<dbReference type="GO" id="GO:0005737">
    <property type="term" value="C:cytoplasm"/>
    <property type="evidence" value="ECO:0007669"/>
    <property type="project" value="UniProtKB-SubCell"/>
</dbReference>
<dbReference type="GO" id="GO:0044183">
    <property type="term" value="F:protein folding chaperone"/>
    <property type="evidence" value="ECO:0007669"/>
    <property type="project" value="TreeGrafter"/>
</dbReference>
<dbReference type="GO" id="GO:0051082">
    <property type="term" value="F:unfolded protein binding"/>
    <property type="evidence" value="ECO:0007669"/>
    <property type="project" value="UniProtKB-UniRule"/>
</dbReference>
<dbReference type="GO" id="GO:0042026">
    <property type="term" value="P:protein refolding"/>
    <property type="evidence" value="ECO:0007669"/>
    <property type="project" value="TreeGrafter"/>
</dbReference>
<dbReference type="CDD" id="cd00498">
    <property type="entry name" value="Hsp33"/>
    <property type="match status" value="1"/>
</dbReference>
<dbReference type="Gene3D" id="3.55.30.10">
    <property type="entry name" value="Hsp33 domain"/>
    <property type="match status" value="1"/>
</dbReference>
<dbReference type="Gene3D" id="3.90.1280.10">
    <property type="entry name" value="HSP33 redox switch-like"/>
    <property type="match status" value="1"/>
</dbReference>
<dbReference type="HAMAP" id="MF_00117">
    <property type="entry name" value="HslO"/>
    <property type="match status" value="1"/>
</dbReference>
<dbReference type="InterPro" id="IPR000397">
    <property type="entry name" value="Heat_shock_Hsp33"/>
</dbReference>
<dbReference type="InterPro" id="IPR016154">
    <property type="entry name" value="Heat_shock_Hsp33_C"/>
</dbReference>
<dbReference type="InterPro" id="IPR016153">
    <property type="entry name" value="Heat_shock_Hsp33_N"/>
</dbReference>
<dbReference type="NCBIfam" id="NF001033">
    <property type="entry name" value="PRK00114.1"/>
    <property type="match status" value="1"/>
</dbReference>
<dbReference type="PANTHER" id="PTHR30111">
    <property type="entry name" value="33 KDA CHAPERONIN"/>
    <property type="match status" value="1"/>
</dbReference>
<dbReference type="PANTHER" id="PTHR30111:SF1">
    <property type="entry name" value="33 KDA CHAPERONIN"/>
    <property type="match status" value="1"/>
</dbReference>
<dbReference type="Pfam" id="PF01430">
    <property type="entry name" value="HSP33"/>
    <property type="match status" value="1"/>
</dbReference>
<dbReference type="PIRSF" id="PIRSF005261">
    <property type="entry name" value="Heat_shock_Hsp33"/>
    <property type="match status" value="1"/>
</dbReference>
<dbReference type="SUPFAM" id="SSF64397">
    <property type="entry name" value="Hsp33 domain"/>
    <property type="match status" value="1"/>
</dbReference>
<dbReference type="SUPFAM" id="SSF118352">
    <property type="entry name" value="HSP33 redox switch-like"/>
    <property type="match status" value="1"/>
</dbReference>
<comment type="function">
    <text evidence="1">Redox regulated molecular chaperone. Protects both thermally unfolding and oxidatively damaged proteins from irreversible aggregation. Plays an important role in the bacterial defense system toward oxidative stress.</text>
</comment>
<comment type="subcellular location">
    <subcellularLocation>
        <location evidence="1">Cytoplasm</location>
    </subcellularLocation>
</comment>
<comment type="PTM">
    <text evidence="1">Under oxidizing conditions two disulfide bonds are formed involving the reactive cysteines. Under reducing conditions zinc is bound to the reactive cysteines and the protein is inactive.</text>
</comment>
<comment type="similarity">
    <text evidence="1">Belongs to the HSP33 family.</text>
</comment>
<sequence length="304" mass="32864">MADKLIRATAADGGIRVVGVITTRLTEEARQRHKLSNVATAALGRTMASALLLASSLKKPGSRVNIRIKGDGPLGGVLVDAGLDGTVRGYVDYPQVELLPNAQGKLDVGRAVGDKGYVRVLREEKGEGRNELQESIVEIVSGEVGEDIAYYLDQSEQIPSALQVGVFVGTTTGVTAAGGILLQVLSKEASRDEVLVARLESRLRKLTGFTPLLRAGKGLEDIFQELLGDMGLEIFPAVQMLRFDCDCSFERALGALKFLGVDELKDIIEKDKQAEAICEFCREVYNANERQLIELVESLQAESC</sequence>
<name>HSLO_MICAN</name>
<evidence type="ECO:0000255" key="1">
    <source>
        <dbReference type="HAMAP-Rule" id="MF_00117"/>
    </source>
</evidence>
<gene>
    <name evidence="1" type="primary">hslO</name>
    <name type="ordered locus">MAE_53700</name>
</gene>